<sequence>MAIERTFSMIKPDATKRNLTGAITKMLEDAGLRVVASKRVWMSRREAEGFYAVHKDRPFFGELVEGMTSGPTVVQVLEGEGAILKNREIMGATNPANAAEGTIRKVHALSIGENSVHGSDAPETAAQEIKYWFSDTEIVG</sequence>
<name>NDK_RHIEC</name>
<proteinExistence type="inferred from homology"/>
<dbReference type="EC" id="2.7.4.6" evidence="1"/>
<dbReference type="EMBL" id="CP000133">
    <property type="protein sequence ID" value="ABC90275.1"/>
    <property type="molecule type" value="Genomic_DNA"/>
</dbReference>
<dbReference type="RefSeq" id="WP_011424805.1">
    <property type="nucleotide sequence ID" value="NC_007761.1"/>
</dbReference>
<dbReference type="SMR" id="Q2KA61"/>
<dbReference type="GeneID" id="66141228"/>
<dbReference type="GeneID" id="66145654"/>
<dbReference type="KEGG" id="ret:RHE_CH01472"/>
<dbReference type="eggNOG" id="COG0105">
    <property type="taxonomic scope" value="Bacteria"/>
</dbReference>
<dbReference type="HOGENOM" id="CLU_060216_8_1_5"/>
<dbReference type="OrthoDB" id="9801161at2"/>
<dbReference type="Proteomes" id="UP000001936">
    <property type="component" value="Chromosome"/>
</dbReference>
<dbReference type="GO" id="GO:0005737">
    <property type="term" value="C:cytoplasm"/>
    <property type="evidence" value="ECO:0007669"/>
    <property type="project" value="UniProtKB-SubCell"/>
</dbReference>
<dbReference type="GO" id="GO:0005524">
    <property type="term" value="F:ATP binding"/>
    <property type="evidence" value="ECO:0007669"/>
    <property type="project" value="UniProtKB-UniRule"/>
</dbReference>
<dbReference type="GO" id="GO:0046872">
    <property type="term" value="F:metal ion binding"/>
    <property type="evidence" value="ECO:0007669"/>
    <property type="project" value="UniProtKB-KW"/>
</dbReference>
<dbReference type="GO" id="GO:0004550">
    <property type="term" value="F:nucleoside diphosphate kinase activity"/>
    <property type="evidence" value="ECO:0007669"/>
    <property type="project" value="UniProtKB-UniRule"/>
</dbReference>
<dbReference type="GO" id="GO:0006241">
    <property type="term" value="P:CTP biosynthetic process"/>
    <property type="evidence" value="ECO:0007669"/>
    <property type="project" value="UniProtKB-UniRule"/>
</dbReference>
<dbReference type="GO" id="GO:0006183">
    <property type="term" value="P:GTP biosynthetic process"/>
    <property type="evidence" value="ECO:0007669"/>
    <property type="project" value="UniProtKB-UniRule"/>
</dbReference>
<dbReference type="GO" id="GO:0006228">
    <property type="term" value="P:UTP biosynthetic process"/>
    <property type="evidence" value="ECO:0007669"/>
    <property type="project" value="UniProtKB-UniRule"/>
</dbReference>
<dbReference type="CDD" id="cd04413">
    <property type="entry name" value="NDPk_I"/>
    <property type="match status" value="1"/>
</dbReference>
<dbReference type="FunFam" id="3.30.70.141:FF:000039">
    <property type="entry name" value="Nucleoside diphosphate kinase B"/>
    <property type="match status" value="1"/>
</dbReference>
<dbReference type="Gene3D" id="3.30.70.141">
    <property type="entry name" value="Nucleoside diphosphate kinase-like domain"/>
    <property type="match status" value="1"/>
</dbReference>
<dbReference type="HAMAP" id="MF_00451">
    <property type="entry name" value="NDP_kinase"/>
    <property type="match status" value="1"/>
</dbReference>
<dbReference type="InterPro" id="IPR034907">
    <property type="entry name" value="NDK-like_dom"/>
</dbReference>
<dbReference type="InterPro" id="IPR036850">
    <property type="entry name" value="NDK-like_dom_sf"/>
</dbReference>
<dbReference type="InterPro" id="IPR001564">
    <property type="entry name" value="Nucleoside_diP_kinase"/>
</dbReference>
<dbReference type="InterPro" id="IPR023005">
    <property type="entry name" value="Nucleoside_diP_kinase_AS"/>
</dbReference>
<dbReference type="NCBIfam" id="NF001908">
    <property type="entry name" value="PRK00668.1"/>
    <property type="match status" value="1"/>
</dbReference>
<dbReference type="PANTHER" id="PTHR46161">
    <property type="entry name" value="NUCLEOSIDE DIPHOSPHATE KINASE"/>
    <property type="match status" value="1"/>
</dbReference>
<dbReference type="PANTHER" id="PTHR46161:SF3">
    <property type="entry name" value="NUCLEOSIDE DIPHOSPHATE KINASE DDB_G0292928-RELATED"/>
    <property type="match status" value="1"/>
</dbReference>
<dbReference type="Pfam" id="PF00334">
    <property type="entry name" value="NDK"/>
    <property type="match status" value="1"/>
</dbReference>
<dbReference type="PRINTS" id="PR01243">
    <property type="entry name" value="NUCDPKINASE"/>
</dbReference>
<dbReference type="SMART" id="SM00562">
    <property type="entry name" value="NDK"/>
    <property type="match status" value="1"/>
</dbReference>
<dbReference type="SUPFAM" id="SSF54919">
    <property type="entry name" value="Nucleoside diphosphate kinase, NDK"/>
    <property type="match status" value="1"/>
</dbReference>
<dbReference type="PROSITE" id="PS00469">
    <property type="entry name" value="NDPK"/>
    <property type="match status" value="1"/>
</dbReference>
<dbReference type="PROSITE" id="PS51374">
    <property type="entry name" value="NDPK_LIKE"/>
    <property type="match status" value="1"/>
</dbReference>
<reference key="1">
    <citation type="journal article" date="2006" name="Proc. Natl. Acad. Sci. U.S.A.">
        <title>The partitioned Rhizobium etli genome: genetic and metabolic redundancy in seven interacting replicons.</title>
        <authorList>
            <person name="Gonzalez V."/>
            <person name="Santamaria R.I."/>
            <person name="Bustos P."/>
            <person name="Hernandez-Gonzalez I."/>
            <person name="Medrano-Soto A."/>
            <person name="Moreno-Hagelsieb G."/>
            <person name="Janga S.C."/>
            <person name="Ramirez M.A."/>
            <person name="Jimenez-Jacinto V."/>
            <person name="Collado-Vides J."/>
            <person name="Davila G."/>
        </authorList>
    </citation>
    <scope>NUCLEOTIDE SEQUENCE [LARGE SCALE GENOMIC DNA]</scope>
    <source>
        <strain>ATCC 51251 / DSM 11541 / JCM 21823 / NBRC 15573 / CFN 42</strain>
    </source>
</reference>
<protein>
    <recommendedName>
        <fullName evidence="1">Nucleoside diphosphate kinase</fullName>
        <shortName evidence="1">NDK</shortName>
        <shortName evidence="1">NDP kinase</shortName>
        <ecNumber evidence="1">2.7.4.6</ecNumber>
    </recommendedName>
    <alternativeName>
        <fullName evidence="1">Nucleoside-2-P kinase</fullName>
    </alternativeName>
</protein>
<accession>Q2KA61</accession>
<evidence type="ECO:0000255" key="1">
    <source>
        <dbReference type="HAMAP-Rule" id="MF_00451"/>
    </source>
</evidence>
<gene>
    <name evidence="1" type="primary">ndk</name>
    <name type="ordered locus">RHE_CH01472</name>
</gene>
<keyword id="KW-0067">ATP-binding</keyword>
<keyword id="KW-0963">Cytoplasm</keyword>
<keyword id="KW-0418">Kinase</keyword>
<keyword id="KW-0460">Magnesium</keyword>
<keyword id="KW-0479">Metal-binding</keyword>
<keyword id="KW-0546">Nucleotide metabolism</keyword>
<keyword id="KW-0547">Nucleotide-binding</keyword>
<keyword id="KW-0597">Phosphoprotein</keyword>
<keyword id="KW-1185">Reference proteome</keyword>
<keyword id="KW-0808">Transferase</keyword>
<feature type="chain" id="PRO_0000242509" description="Nucleoside diphosphate kinase">
    <location>
        <begin position="1"/>
        <end position="140"/>
    </location>
</feature>
<feature type="active site" description="Pros-phosphohistidine intermediate" evidence="1">
    <location>
        <position position="117"/>
    </location>
</feature>
<feature type="binding site" evidence="1">
    <location>
        <position position="11"/>
    </location>
    <ligand>
        <name>ATP</name>
        <dbReference type="ChEBI" id="CHEBI:30616"/>
    </ligand>
</feature>
<feature type="binding site" evidence="1">
    <location>
        <position position="59"/>
    </location>
    <ligand>
        <name>ATP</name>
        <dbReference type="ChEBI" id="CHEBI:30616"/>
    </ligand>
</feature>
<feature type="binding site" evidence="1">
    <location>
        <position position="87"/>
    </location>
    <ligand>
        <name>ATP</name>
        <dbReference type="ChEBI" id="CHEBI:30616"/>
    </ligand>
</feature>
<feature type="binding site" evidence="1">
    <location>
        <position position="93"/>
    </location>
    <ligand>
        <name>ATP</name>
        <dbReference type="ChEBI" id="CHEBI:30616"/>
    </ligand>
</feature>
<feature type="binding site" evidence="1">
    <location>
        <position position="104"/>
    </location>
    <ligand>
        <name>ATP</name>
        <dbReference type="ChEBI" id="CHEBI:30616"/>
    </ligand>
</feature>
<feature type="binding site" evidence="1">
    <location>
        <position position="114"/>
    </location>
    <ligand>
        <name>ATP</name>
        <dbReference type="ChEBI" id="CHEBI:30616"/>
    </ligand>
</feature>
<comment type="function">
    <text evidence="1">Major role in the synthesis of nucleoside triphosphates other than ATP. The ATP gamma phosphate is transferred to the NDP beta phosphate via a ping-pong mechanism, using a phosphorylated active-site intermediate.</text>
</comment>
<comment type="catalytic activity">
    <reaction evidence="1">
        <text>a 2'-deoxyribonucleoside 5'-diphosphate + ATP = a 2'-deoxyribonucleoside 5'-triphosphate + ADP</text>
        <dbReference type="Rhea" id="RHEA:44640"/>
        <dbReference type="ChEBI" id="CHEBI:30616"/>
        <dbReference type="ChEBI" id="CHEBI:61560"/>
        <dbReference type="ChEBI" id="CHEBI:73316"/>
        <dbReference type="ChEBI" id="CHEBI:456216"/>
        <dbReference type="EC" id="2.7.4.6"/>
    </reaction>
</comment>
<comment type="catalytic activity">
    <reaction evidence="1">
        <text>a ribonucleoside 5'-diphosphate + ATP = a ribonucleoside 5'-triphosphate + ADP</text>
        <dbReference type="Rhea" id="RHEA:18113"/>
        <dbReference type="ChEBI" id="CHEBI:30616"/>
        <dbReference type="ChEBI" id="CHEBI:57930"/>
        <dbReference type="ChEBI" id="CHEBI:61557"/>
        <dbReference type="ChEBI" id="CHEBI:456216"/>
        <dbReference type="EC" id="2.7.4.6"/>
    </reaction>
</comment>
<comment type="cofactor">
    <cofactor evidence="1">
        <name>Mg(2+)</name>
        <dbReference type="ChEBI" id="CHEBI:18420"/>
    </cofactor>
</comment>
<comment type="subunit">
    <text evidence="1">Homotetramer.</text>
</comment>
<comment type="subcellular location">
    <subcellularLocation>
        <location evidence="1">Cytoplasm</location>
    </subcellularLocation>
</comment>
<comment type="similarity">
    <text evidence="1">Belongs to the NDK family.</text>
</comment>
<organism>
    <name type="scientific">Rhizobium etli (strain ATCC 51251 / DSM 11541 / JCM 21823 / NBRC 15573 / CFN 42)</name>
    <dbReference type="NCBI Taxonomy" id="347834"/>
    <lineage>
        <taxon>Bacteria</taxon>
        <taxon>Pseudomonadati</taxon>
        <taxon>Pseudomonadota</taxon>
        <taxon>Alphaproteobacteria</taxon>
        <taxon>Hyphomicrobiales</taxon>
        <taxon>Rhizobiaceae</taxon>
        <taxon>Rhizobium/Agrobacterium group</taxon>
        <taxon>Rhizobium</taxon>
    </lineage>
</organism>